<feature type="signal peptide" evidence="1">
    <location>
        <begin position="1"/>
        <end position="20"/>
    </location>
</feature>
<feature type="chain" id="PRO_0000416712" description="Membrane glycoprotein UL9">
    <location>
        <begin position="21"/>
        <end position="233"/>
    </location>
</feature>
<feature type="transmembrane region" description="Helical" evidence="1">
    <location>
        <begin position="194"/>
        <end position="214"/>
    </location>
</feature>
<feature type="glycosylation site" description="N-linked (GlcNAc...) asparagine; by host" evidence="1">
    <location>
        <position position="40"/>
    </location>
</feature>
<feature type="glycosylation site" description="N-linked (GlcNAc...) asparagine; by host" evidence="1">
    <location>
        <position position="94"/>
    </location>
</feature>
<feature type="glycosylation site" description="N-linked (GlcNAc...) asparagine; by host" evidence="1">
    <location>
        <position position="101"/>
    </location>
</feature>
<feature type="glycosylation site" description="N-linked (GlcNAc...) asparagine; by host" evidence="1">
    <location>
        <position position="131"/>
    </location>
</feature>
<feature type="glycosylation site" description="N-linked (GlcNAc...) asparagine; by host" evidence="1">
    <location>
        <position position="169"/>
    </location>
</feature>
<dbReference type="EMBL" id="AY446894">
    <property type="protein sequence ID" value="AAR31575.1"/>
    <property type="molecule type" value="Genomic_DNA"/>
</dbReference>
<dbReference type="RefSeq" id="YP_081469.1">
    <property type="nucleotide sequence ID" value="NC_006273.2"/>
</dbReference>
<dbReference type="GlyCosmos" id="F5H9T4">
    <property type="glycosylation" value="5 sites, No reported glycans"/>
</dbReference>
<dbReference type="DNASU" id="3077459"/>
<dbReference type="GeneID" id="3077459"/>
<dbReference type="KEGG" id="vg:3077459"/>
<dbReference type="Reactome" id="R-HSA-9610379">
    <property type="pathway name" value="HCMV Late Events"/>
</dbReference>
<dbReference type="Proteomes" id="UP000000938">
    <property type="component" value="Segment"/>
</dbReference>
<dbReference type="GO" id="GO:0033644">
    <property type="term" value="C:host cell membrane"/>
    <property type="evidence" value="ECO:0007669"/>
    <property type="project" value="UniProtKB-SubCell"/>
</dbReference>
<dbReference type="GO" id="GO:0016020">
    <property type="term" value="C:membrane"/>
    <property type="evidence" value="ECO:0007669"/>
    <property type="project" value="UniProtKB-KW"/>
</dbReference>
<proteinExistence type="inferred from homology"/>
<name>UL09_HCMVM</name>
<sequence length="233" mass="26998">MSKRLQVFPWITILFYTSKSQYWNYMTIPCTPTVGYGSHNISLHPLNNSLFQDDVFEWYIDKPMVTNKLCLYQSNERIKSNLDSPNIMWQCTDNRTLILMNLTTTYSRNYYFQSFKYLGQGVPKPNNLCYNVSVHFTHQTHCHTTTSSLYPPTSVHDSLEISQSFTSTNFTHTAVHYAAGNVEAQHDTATSHTMWIIPLVIVITIIVLICFKFPQKAWNKFTQYRYSGMLAAA</sequence>
<organismHost>
    <name type="scientific">Homo sapiens</name>
    <name type="common">Human</name>
    <dbReference type="NCBI Taxonomy" id="9606"/>
</organismHost>
<keyword id="KW-0325">Glycoprotein</keyword>
<keyword id="KW-1043">Host membrane</keyword>
<keyword id="KW-0472">Membrane</keyword>
<keyword id="KW-1185">Reference proteome</keyword>
<keyword id="KW-0732">Signal</keyword>
<keyword id="KW-0812">Transmembrane</keyword>
<keyword id="KW-1133">Transmembrane helix</keyword>
<gene>
    <name type="primary">UL9</name>
</gene>
<evidence type="ECO:0000255" key="1"/>
<evidence type="ECO:0000305" key="2"/>
<organism>
    <name type="scientific">Human cytomegalovirus (strain Merlin)</name>
    <name type="common">HHV-5</name>
    <name type="synonym">Human herpesvirus 5</name>
    <dbReference type="NCBI Taxonomy" id="295027"/>
    <lineage>
        <taxon>Viruses</taxon>
        <taxon>Duplodnaviria</taxon>
        <taxon>Heunggongvirae</taxon>
        <taxon>Peploviricota</taxon>
        <taxon>Herviviricetes</taxon>
        <taxon>Herpesvirales</taxon>
        <taxon>Orthoherpesviridae</taxon>
        <taxon>Betaherpesvirinae</taxon>
        <taxon>Cytomegalovirus</taxon>
        <taxon>Cytomegalovirus humanbeta5</taxon>
        <taxon>Human cytomegalovirus</taxon>
    </lineage>
</organism>
<accession>F5H9T4</accession>
<comment type="subcellular location">
    <subcellularLocation>
        <location evidence="2">Host membrane</location>
        <topology evidence="2">Single-pass membrane protein</topology>
    </subcellularLocation>
</comment>
<comment type="similarity">
    <text evidence="2">Belongs to the HHV-5 UL9 family.</text>
</comment>
<protein>
    <recommendedName>
        <fullName>Membrane glycoprotein UL9</fullName>
    </recommendedName>
</protein>
<reference key="1">
    <citation type="journal article" date="2004" name="J. Gen. Virol.">
        <title>Genetic content of wild-type human cytomegalovirus.</title>
        <authorList>
            <person name="Dolan A."/>
            <person name="Cunningham C."/>
            <person name="Hector R.D."/>
            <person name="Hassan-Walker A.F."/>
            <person name="Lee L."/>
            <person name="Addison C."/>
            <person name="Dargan D.J."/>
            <person name="McGeoch D.J."/>
            <person name="Gatherer D."/>
            <person name="Emery V.C."/>
            <person name="Griffiths P.D."/>
            <person name="Sinzger C."/>
            <person name="McSharry B.P."/>
            <person name="Wilkinson G.W.G."/>
            <person name="Davison A.J."/>
        </authorList>
    </citation>
    <scope>NUCLEOTIDE SEQUENCE [LARGE SCALE GENOMIC DNA]</scope>
</reference>